<proteinExistence type="inferred from homology"/>
<accession>B5R3N1</accession>
<reference key="1">
    <citation type="journal article" date="2008" name="Genome Res.">
        <title>Comparative genome analysis of Salmonella enteritidis PT4 and Salmonella gallinarum 287/91 provides insights into evolutionary and host adaptation pathways.</title>
        <authorList>
            <person name="Thomson N.R."/>
            <person name="Clayton D.J."/>
            <person name="Windhorst D."/>
            <person name="Vernikos G."/>
            <person name="Davidson S."/>
            <person name="Churcher C."/>
            <person name="Quail M.A."/>
            <person name="Stevens M."/>
            <person name="Jones M.A."/>
            <person name="Watson M."/>
            <person name="Barron A."/>
            <person name="Layton A."/>
            <person name="Pickard D."/>
            <person name="Kingsley R.A."/>
            <person name="Bignell A."/>
            <person name="Clark L."/>
            <person name="Harris B."/>
            <person name="Ormond D."/>
            <person name="Abdellah Z."/>
            <person name="Brooks K."/>
            <person name="Cherevach I."/>
            <person name="Chillingworth T."/>
            <person name="Woodward J."/>
            <person name="Norberczak H."/>
            <person name="Lord A."/>
            <person name="Arrowsmith C."/>
            <person name="Jagels K."/>
            <person name="Moule S."/>
            <person name="Mungall K."/>
            <person name="Saunders M."/>
            <person name="Whitehead S."/>
            <person name="Chabalgoity J.A."/>
            <person name="Maskell D."/>
            <person name="Humphreys T."/>
            <person name="Roberts M."/>
            <person name="Barrow P.A."/>
            <person name="Dougan G."/>
            <person name="Parkhill J."/>
        </authorList>
    </citation>
    <scope>NUCLEOTIDE SEQUENCE [LARGE SCALE GENOMIC DNA]</scope>
    <source>
        <strain>P125109</strain>
    </source>
</reference>
<evidence type="ECO:0000255" key="1">
    <source>
        <dbReference type="HAMAP-Rule" id="MF_00190"/>
    </source>
</evidence>
<keyword id="KW-0997">Cell inner membrane</keyword>
<keyword id="KW-1003">Cell membrane</keyword>
<keyword id="KW-0444">Lipid biosynthesis</keyword>
<keyword id="KW-0443">Lipid metabolism</keyword>
<keyword id="KW-0472">Membrane</keyword>
<keyword id="KW-0594">Phospholipid biosynthesis</keyword>
<keyword id="KW-1208">Phospholipid metabolism</keyword>
<keyword id="KW-0677">Repeat</keyword>
<keyword id="KW-0808">Transferase</keyword>
<keyword id="KW-0812">Transmembrane</keyword>
<keyword id="KW-1133">Transmembrane helix</keyword>
<feature type="chain" id="PRO_1000098913" description="Cardiolipin synthase A">
    <location>
        <begin position="1"/>
        <end position="486"/>
    </location>
</feature>
<feature type="transmembrane region" description="Helical" evidence="1">
    <location>
        <begin position="3"/>
        <end position="23"/>
    </location>
</feature>
<feature type="transmembrane region" description="Helical" evidence="1">
    <location>
        <begin position="38"/>
        <end position="58"/>
    </location>
</feature>
<feature type="domain" description="PLD phosphodiesterase 1" evidence="1">
    <location>
        <begin position="219"/>
        <end position="246"/>
    </location>
</feature>
<feature type="domain" description="PLD phosphodiesterase 2" evidence="1">
    <location>
        <begin position="399"/>
        <end position="426"/>
    </location>
</feature>
<feature type="active site" evidence="1">
    <location>
        <position position="224"/>
    </location>
</feature>
<feature type="active site" evidence="1">
    <location>
        <position position="226"/>
    </location>
</feature>
<feature type="active site" evidence="1">
    <location>
        <position position="231"/>
    </location>
</feature>
<feature type="active site" evidence="1">
    <location>
        <position position="404"/>
    </location>
</feature>
<feature type="active site" evidence="1">
    <location>
        <position position="406"/>
    </location>
</feature>
<feature type="active site" evidence="1">
    <location>
        <position position="411"/>
    </location>
</feature>
<protein>
    <recommendedName>
        <fullName evidence="1">Cardiolipin synthase A</fullName>
        <shortName evidence="1">CL synthase</shortName>
        <ecNumber evidence="1">2.7.8.-</ecNumber>
    </recommendedName>
</protein>
<name>CLSA_SALEP</name>
<gene>
    <name evidence="1" type="primary">clsA</name>
    <name type="synonym">cls</name>
    <name type="ordered locus">SEN1295</name>
</gene>
<dbReference type="EC" id="2.7.8.-" evidence="1"/>
<dbReference type="EMBL" id="AM933172">
    <property type="protein sequence ID" value="CAR32873.1"/>
    <property type="molecule type" value="Genomic_DNA"/>
</dbReference>
<dbReference type="RefSeq" id="WP_000206886.1">
    <property type="nucleotide sequence ID" value="NC_011294.1"/>
</dbReference>
<dbReference type="SMR" id="B5R3N1"/>
<dbReference type="KEGG" id="set:SEN1295"/>
<dbReference type="HOGENOM" id="CLU_038053_1_0_6"/>
<dbReference type="Proteomes" id="UP000000613">
    <property type="component" value="Chromosome"/>
</dbReference>
<dbReference type="GO" id="GO:0005886">
    <property type="term" value="C:plasma membrane"/>
    <property type="evidence" value="ECO:0007669"/>
    <property type="project" value="UniProtKB-SubCell"/>
</dbReference>
<dbReference type="GO" id="GO:0008808">
    <property type="term" value="F:cardiolipin synthase activity"/>
    <property type="evidence" value="ECO:0007669"/>
    <property type="project" value="InterPro"/>
</dbReference>
<dbReference type="GO" id="GO:0032049">
    <property type="term" value="P:cardiolipin biosynthetic process"/>
    <property type="evidence" value="ECO:0007669"/>
    <property type="project" value="InterPro"/>
</dbReference>
<dbReference type="CDD" id="cd09152">
    <property type="entry name" value="PLDc_EcCLS_like_1"/>
    <property type="match status" value="1"/>
</dbReference>
<dbReference type="CDD" id="cd09158">
    <property type="entry name" value="PLDc_EcCLS_like_2"/>
    <property type="match status" value="1"/>
</dbReference>
<dbReference type="FunFam" id="3.30.870.10:FF:000002">
    <property type="entry name" value="Cardiolipin synthase A"/>
    <property type="match status" value="1"/>
</dbReference>
<dbReference type="FunFam" id="3.30.870.10:FF:000003">
    <property type="entry name" value="Cardiolipin synthase A"/>
    <property type="match status" value="1"/>
</dbReference>
<dbReference type="Gene3D" id="3.30.870.10">
    <property type="entry name" value="Endonuclease Chain A"/>
    <property type="match status" value="2"/>
</dbReference>
<dbReference type="HAMAP" id="MF_00190">
    <property type="entry name" value="Cardiolipin_synth_ClsA"/>
    <property type="match status" value="1"/>
</dbReference>
<dbReference type="InterPro" id="IPR022924">
    <property type="entry name" value="Cardiolipin_synthase"/>
</dbReference>
<dbReference type="InterPro" id="IPR030840">
    <property type="entry name" value="CL_synthase_A"/>
</dbReference>
<dbReference type="InterPro" id="IPR027379">
    <property type="entry name" value="CLS_N"/>
</dbReference>
<dbReference type="InterPro" id="IPR025202">
    <property type="entry name" value="PLD-like_dom"/>
</dbReference>
<dbReference type="InterPro" id="IPR001736">
    <property type="entry name" value="PLipase_D/transphosphatidylase"/>
</dbReference>
<dbReference type="NCBIfam" id="TIGR04265">
    <property type="entry name" value="bac_cardiolipin"/>
    <property type="match status" value="1"/>
</dbReference>
<dbReference type="PANTHER" id="PTHR21248">
    <property type="entry name" value="CARDIOLIPIN SYNTHASE"/>
    <property type="match status" value="1"/>
</dbReference>
<dbReference type="PANTHER" id="PTHR21248:SF22">
    <property type="entry name" value="PHOSPHOLIPASE D"/>
    <property type="match status" value="1"/>
</dbReference>
<dbReference type="Pfam" id="PF13091">
    <property type="entry name" value="PLDc_2"/>
    <property type="match status" value="2"/>
</dbReference>
<dbReference type="Pfam" id="PF13396">
    <property type="entry name" value="PLDc_N"/>
    <property type="match status" value="1"/>
</dbReference>
<dbReference type="SMART" id="SM00155">
    <property type="entry name" value="PLDc"/>
    <property type="match status" value="2"/>
</dbReference>
<dbReference type="SUPFAM" id="SSF56024">
    <property type="entry name" value="Phospholipase D/nuclease"/>
    <property type="match status" value="2"/>
</dbReference>
<dbReference type="PROSITE" id="PS50035">
    <property type="entry name" value="PLD"/>
    <property type="match status" value="2"/>
</dbReference>
<organism>
    <name type="scientific">Salmonella enteritidis PT4 (strain P125109)</name>
    <dbReference type="NCBI Taxonomy" id="550537"/>
    <lineage>
        <taxon>Bacteria</taxon>
        <taxon>Pseudomonadati</taxon>
        <taxon>Pseudomonadota</taxon>
        <taxon>Gammaproteobacteria</taxon>
        <taxon>Enterobacterales</taxon>
        <taxon>Enterobacteriaceae</taxon>
        <taxon>Salmonella</taxon>
    </lineage>
</organism>
<sequence length="486" mass="54734">MTTFYTVVSWLVILGYWVLIAGVTLRILMKRRAVPSAMAWLLIIYILPLVGIIAYLSVGELHLGKRRAERARAMWPSTAKWLNDLKACKHIFAQENSSVASSLFKLCERRQGIAGVKGNQLQLLTDSDDVMQALIRDIQLARHNIEMVFYIWQPGGMADQVAESLMAAARRGIHCRLMLDSAGSVAFFRSPWAAMMRNAGIEVVEALKVNLMRVFLRRMDLRQHRKMVMIDNYIAYTGSMNMVDPRFFKQDAGVGQWVDLMARMEGPVATAMGIVYSCDWEIETGKRILPPPPDVNIMPFEQASGHTIHTIASGPGFPEDLIHQALLTATYAAREYLIMTTPYFVPSDDLLHAICTAAQRGVDVSIILPRKNDSLLVGWASRAFFSELLAAGVKIYQFEGGLLHTKSVLVDGELSLVGTVNLDMRSLWLNFEITLVIDDTGFGADLAAVQDDYISRSRLLDARLWVKRPLWQRITERLFYFFSPLL</sequence>
<comment type="function">
    <text evidence="1">Catalyzes the reversible phosphatidyl group transfer from one phosphatidylglycerol molecule to another to form cardiolipin (CL) (diphosphatidylglycerol) and glycerol.</text>
</comment>
<comment type="catalytic activity">
    <reaction evidence="1">
        <text>2 a 1,2-diacyl-sn-glycero-3-phospho-(1'-sn-glycerol) = a cardiolipin + glycerol</text>
        <dbReference type="Rhea" id="RHEA:31451"/>
        <dbReference type="ChEBI" id="CHEBI:17754"/>
        <dbReference type="ChEBI" id="CHEBI:62237"/>
        <dbReference type="ChEBI" id="CHEBI:64716"/>
    </reaction>
</comment>
<comment type="subcellular location">
    <subcellularLocation>
        <location evidence="1">Cell inner membrane</location>
        <topology evidence="1">Multi-pass membrane protein</topology>
    </subcellularLocation>
</comment>
<comment type="similarity">
    <text evidence="1">Belongs to the phospholipase D family. Cardiolipin synthase subfamily. ClsA sub-subfamily.</text>
</comment>